<accession>Q3BAK1</accession>
<protein>
    <recommendedName>
        <fullName evidence="2">Small ribosomal subunit protein uS8c</fullName>
    </recommendedName>
    <alternativeName>
        <fullName>30S ribosomal protein S8, chloroplastic</fullName>
    </alternativeName>
</protein>
<feature type="chain" id="PRO_0000225911" description="Small ribosomal subunit protein uS8c">
    <location>
        <begin position="1"/>
        <end position="131"/>
    </location>
</feature>
<dbReference type="EMBL" id="AY916449">
    <property type="protein sequence ID" value="AAW82535.1"/>
    <property type="molecule type" value="Genomic_DNA"/>
</dbReference>
<dbReference type="RefSeq" id="YP_358617.1">
    <property type="nucleotide sequence ID" value="NC_007499.1"/>
</dbReference>
<dbReference type="SMR" id="Q3BAK1"/>
<dbReference type="GeneID" id="3741716"/>
<dbReference type="GO" id="GO:0009507">
    <property type="term" value="C:chloroplast"/>
    <property type="evidence" value="ECO:0007669"/>
    <property type="project" value="UniProtKB-SubCell"/>
</dbReference>
<dbReference type="GO" id="GO:1990904">
    <property type="term" value="C:ribonucleoprotein complex"/>
    <property type="evidence" value="ECO:0007669"/>
    <property type="project" value="UniProtKB-KW"/>
</dbReference>
<dbReference type="GO" id="GO:0005840">
    <property type="term" value="C:ribosome"/>
    <property type="evidence" value="ECO:0007669"/>
    <property type="project" value="UniProtKB-KW"/>
</dbReference>
<dbReference type="GO" id="GO:0019843">
    <property type="term" value="F:rRNA binding"/>
    <property type="evidence" value="ECO:0007669"/>
    <property type="project" value="UniProtKB-UniRule"/>
</dbReference>
<dbReference type="GO" id="GO:0003735">
    <property type="term" value="F:structural constituent of ribosome"/>
    <property type="evidence" value="ECO:0007669"/>
    <property type="project" value="InterPro"/>
</dbReference>
<dbReference type="GO" id="GO:0006412">
    <property type="term" value="P:translation"/>
    <property type="evidence" value="ECO:0007669"/>
    <property type="project" value="UniProtKB-UniRule"/>
</dbReference>
<dbReference type="FunFam" id="3.30.1490.10:FF:000001">
    <property type="entry name" value="30S ribosomal protein S8"/>
    <property type="match status" value="1"/>
</dbReference>
<dbReference type="Gene3D" id="3.30.1370.30">
    <property type="match status" value="1"/>
</dbReference>
<dbReference type="Gene3D" id="3.30.1490.10">
    <property type="match status" value="1"/>
</dbReference>
<dbReference type="HAMAP" id="MF_01302_B">
    <property type="entry name" value="Ribosomal_uS8_B"/>
    <property type="match status" value="1"/>
</dbReference>
<dbReference type="InterPro" id="IPR000630">
    <property type="entry name" value="Ribosomal_uS8"/>
</dbReference>
<dbReference type="InterPro" id="IPR047863">
    <property type="entry name" value="Ribosomal_uS8_CS"/>
</dbReference>
<dbReference type="InterPro" id="IPR035987">
    <property type="entry name" value="Ribosomal_uS8_sf"/>
</dbReference>
<dbReference type="NCBIfam" id="NF001109">
    <property type="entry name" value="PRK00136.1"/>
    <property type="match status" value="1"/>
</dbReference>
<dbReference type="PANTHER" id="PTHR11758">
    <property type="entry name" value="40S RIBOSOMAL PROTEIN S15A"/>
    <property type="match status" value="1"/>
</dbReference>
<dbReference type="Pfam" id="PF00410">
    <property type="entry name" value="Ribosomal_S8"/>
    <property type="match status" value="1"/>
</dbReference>
<dbReference type="SUPFAM" id="SSF56047">
    <property type="entry name" value="Ribosomal protein S8"/>
    <property type="match status" value="1"/>
</dbReference>
<dbReference type="PROSITE" id="PS00053">
    <property type="entry name" value="RIBOSOMAL_S8"/>
    <property type="match status" value="1"/>
</dbReference>
<reference key="1">
    <citation type="journal article" date="2006" name="Mol. Biol. Evol.">
        <title>The chloroplast genome of Phalaenopsis aphrodite (Orchidaceae): comparative analysis of evolutionary rate with that of grasses and its phylogenetic implications.</title>
        <authorList>
            <person name="Chang C.-C."/>
            <person name="Lin H.-C."/>
            <person name="Lin I.-P."/>
            <person name="Chow T.-Y."/>
            <person name="Chen H.-H."/>
            <person name="Chen W.-H."/>
            <person name="Cheng C.-H."/>
            <person name="Lin C.-Y."/>
            <person name="Liu S.-M."/>
            <person name="Chang C.-C."/>
            <person name="Chaw S.-M."/>
        </authorList>
    </citation>
    <scope>NUCLEOTIDE SEQUENCE [LARGE SCALE GENOMIC DNA]</scope>
    <source>
        <strain>cv. Taisugar TS-97</strain>
    </source>
</reference>
<name>RR8_PHAAO</name>
<comment type="function">
    <text evidence="1">One of the primary rRNA binding proteins, it binds directly to 16S rRNA central domain where it helps coordinate assembly of the platform of the 30S subunit.</text>
</comment>
<comment type="subunit">
    <text evidence="1">Part of the 30S ribosomal subunit.</text>
</comment>
<comment type="subcellular location">
    <subcellularLocation>
        <location>Plastid</location>
        <location>Chloroplast</location>
    </subcellularLocation>
</comment>
<comment type="similarity">
    <text evidence="2">Belongs to the universal ribosomal protein uS8 family.</text>
</comment>
<organism>
    <name type="scientific">Phalaenopsis aphrodite subsp. formosana</name>
    <name type="common">Moth orchid</name>
    <dbReference type="NCBI Taxonomy" id="308872"/>
    <lineage>
        <taxon>Eukaryota</taxon>
        <taxon>Viridiplantae</taxon>
        <taxon>Streptophyta</taxon>
        <taxon>Embryophyta</taxon>
        <taxon>Tracheophyta</taxon>
        <taxon>Spermatophyta</taxon>
        <taxon>Magnoliopsida</taxon>
        <taxon>Liliopsida</taxon>
        <taxon>Asparagales</taxon>
        <taxon>Orchidaceae</taxon>
        <taxon>Epidendroideae</taxon>
        <taxon>Vandeae</taxon>
        <taxon>Aeridinae</taxon>
        <taxon>Phalaenopsis</taxon>
    </lineage>
</organism>
<proteinExistence type="inferred from homology"/>
<geneLocation type="chloroplast"/>
<keyword id="KW-0150">Chloroplast</keyword>
<keyword id="KW-0934">Plastid</keyword>
<keyword id="KW-0687">Ribonucleoprotein</keyword>
<keyword id="KW-0689">Ribosomal protein</keyword>
<keyword id="KW-0694">RNA-binding</keyword>
<keyword id="KW-0699">rRNA-binding</keyword>
<sequence>MGRDIIANIITSIRNADIDQKGRVKIVSTNITKNIVKILLREGFIENVRKHQESQKNFLVSTLRHRKTRKGNKINLKRISRPGLRIYSNYQQIPKILGGMGIVILSTSRGIITDREARLEKIGGEILCYIW</sequence>
<evidence type="ECO:0000250" key="1"/>
<evidence type="ECO:0000305" key="2"/>
<gene>
    <name type="primary">rps8</name>
</gene>